<dbReference type="EMBL" id="AC096687">
    <property type="protein sequence ID" value="AAL79739.1"/>
    <property type="molecule type" value="Genomic_DNA"/>
</dbReference>
<dbReference type="EMBL" id="DP000009">
    <property type="protein sequence ID" value="ABF99672.1"/>
    <property type="molecule type" value="Genomic_DNA"/>
</dbReference>
<dbReference type="EMBL" id="DP000009">
    <property type="protein sequence ID" value="ABF99673.1"/>
    <property type="molecule type" value="Genomic_DNA"/>
</dbReference>
<dbReference type="EMBL" id="AP008209">
    <property type="protein sequence ID" value="BAF13689.1"/>
    <property type="molecule type" value="Genomic_DNA"/>
</dbReference>
<dbReference type="EMBL" id="AP014959">
    <property type="protein sequence ID" value="BAS87173.1"/>
    <property type="molecule type" value="Genomic_DNA"/>
</dbReference>
<dbReference type="EMBL" id="CM000140">
    <property type="protein sequence ID" value="EEE60226.1"/>
    <property type="molecule type" value="Genomic_DNA"/>
</dbReference>
<dbReference type="EMBL" id="AK099043">
    <property type="protein sequence ID" value="BAG93890.1"/>
    <property type="molecule type" value="mRNA"/>
</dbReference>
<dbReference type="RefSeq" id="XP_015630413.1">
    <property type="nucleotide sequence ID" value="XM_015774927.1"/>
</dbReference>
<dbReference type="SMR" id="Q8SAY0"/>
<dbReference type="FunCoup" id="Q8SAY0">
    <property type="interactions" value="567"/>
</dbReference>
<dbReference type="STRING" id="39947.Q8SAY0"/>
<dbReference type="PaxDb" id="39947-Q8SAY0"/>
<dbReference type="EnsemblPlants" id="Os03t0828100-02">
    <property type="protein sequence ID" value="Os03t0828100-02"/>
    <property type="gene ID" value="Os03g0828100"/>
</dbReference>
<dbReference type="Gramene" id="Os03t0828100-02">
    <property type="protein sequence ID" value="Os03t0828100-02"/>
    <property type="gene ID" value="Os03g0828100"/>
</dbReference>
<dbReference type="KEGG" id="dosa:Os03g0828100"/>
<dbReference type="eggNOG" id="KOG1870">
    <property type="taxonomic scope" value="Eukaryota"/>
</dbReference>
<dbReference type="HOGENOM" id="CLU_098841_0_0_1"/>
<dbReference type="InParanoid" id="Q8SAY0"/>
<dbReference type="OMA" id="ASTMHKT"/>
<dbReference type="OrthoDB" id="1932324at2759"/>
<dbReference type="Proteomes" id="UP000000763">
    <property type="component" value="Chromosome 3"/>
</dbReference>
<dbReference type="Proteomes" id="UP000007752">
    <property type="component" value="Chromosome 3"/>
</dbReference>
<dbReference type="Proteomes" id="UP000059680">
    <property type="component" value="Chromosome 3"/>
</dbReference>
<dbReference type="ExpressionAtlas" id="Q8SAY0">
    <property type="expression patterns" value="baseline and differential"/>
</dbReference>
<dbReference type="GO" id="GO:0009507">
    <property type="term" value="C:chloroplast"/>
    <property type="evidence" value="ECO:0007669"/>
    <property type="project" value="UniProtKB-SubCell"/>
</dbReference>
<dbReference type="GO" id="GO:1990904">
    <property type="term" value="C:ribonucleoprotein complex"/>
    <property type="evidence" value="ECO:0007669"/>
    <property type="project" value="UniProtKB-KW"/>
</dbReference>
<dbReference type="GO" id="GO:0005840">
    <property type="term" value="C:ribosome"/>
    <property type="evidence" value="ECO:0007669"/>
    <property type="project" value="UniProtKB-KW"/>
</dbReference>
<dbReference type="GO" id="GO:0008097">
    <property type="term" value="F:5S rRNA binding"/>
    <property type="evidence" value="ECO:0000318"/>
    <property type="project" value="GO_Central"/>
</dbReference>
<dbReference type="GO" id="GO:0003735">
    <property type="term" value="F:structural constituent of ribosome"/>
    <property type="evidence" value="ECO:0007669"/>
    <property type="project" value="InterPro"/>
</dbReference>
<dbReference type="GO" id="GO:0006412">
    <property type="term" value="P:translation"/>
    <property type="evidence" value="ECO:0007669"/>
    <property type="project" value="InterPro"/>
</dbReference>
<dbReference type="CDD" id="cd00432">
    <property type="entry name" value="Ribosomal_L18_L5e"/>
    <property type="match status" value="1"/>
</dbReference>
<dbReference type="FunFam" id="3.30.420.100:FF:000001">
    <property type="entry name" value="50S ribosomal protein L18"/>
    <property type="match status" value="1"/>
</dbReference>
<dbReference type="Gene3D" id="3.30.420.100">
    <property type="match status" value="1"/>
</dbReference>
<dbReference type="HAMAP" id="MF_01337_B">
    <property type="entry name" value="Ribosomal_uL18_B"/>
    <property type="match status" value="1"/>
</dbReference>
<dbReference type="InterPro" id="IPR004389">
    <property type="entry name" value="Ribosomal_uL18_bac-type"/>
</dbReference>
<dbReference type="InterPro" id="IPR005484">
    <property type="entry name" value="Ribosomal_uL18_bac/euk"/>
</dbReference>
<dbReference type="NCBIfam" id="TIGR00060">
    <property type="entry name" value="L18_bact"/>
    <property type="match status" value="1"/>
</dbReference>
<dbReference type="PANTHER" id="PTHR12899">
    <property type="entry name" value="39S RIBOSOMAL PROTEIN L18, MITOCHONDRIAL"/>
    <property type="match status" value="1"/>
</dbReference>
<dbReference type="PANTHER" id="PTHR12899:SF3">
    <property type="entry name" value="LARGE RIBOSOMAL SUBUNIT PROTEIN UL18M"/>
    <property type="match status" value="1"/>
</dbReference>
<dbReference type="Pfam" id="PF00861">
    <property type="entry name" value="Ribosomal_L18p"/>
    <property type="match status" value="1"/>
</dbReference>
<dbReference type="SUPFAM" id="SSF53137">
    <property type="entry name" value="Translational machinery components"/>
    <property type="match status" value="1"/>
</dbReference>
<comment type="function">
    <text evidence="1">Binds 5S rRNA, forms part of the central protuberance of the 50S subunit.</text>
</comment>
<comment type="subunit">
    <text evidence="1">Part of the 50S ribosomal subunit; contacts the 5S rRNA.</text>
</comment>
<comment type="subcellular location">
    <subcellularLocation>
        <location>Plastid</location>
        <location>Chloroplast</location>
    </subcellularLocation>
</comment>
<comment type="similarity">
    <text evidence="3">Belongs to the universal ribosomal protein uL18 family.</text>
</comment>
<protein>
    <recommendedName>
        <fullName evidence="3">Large ribosomal subunit protein uL18c</fullName>
    </recommendedName>
    <alternativeName>
        <fullName>50S ribosomal protein L18, chloroplastic</fullName>
    </alternativeName>
    <alternativeName>
        <fullName>CL18</fullName>
    </alternativeName>
</protein>
<feature type="transit peptide" description="Chloroplast" evidence="2">
    <location>
        <begin position="1"/>
        <end position="63"/>
    </location>
</feature>
<feature type="chain" id="PRO_0000030471" description="Large ribosomal subunit protein uL18c">
    <location>
        <begin position="64"/>
        <end position="170"/>
    </location>
</feature>
<proteinExistence type="evidence at transcript level"/>
<evidence type="ECO:0000250" key="1"/>
<evidence type="ECO:0000255" key="2"/>
<evidence type="ECO:0000305" key="3"/>
<evidence type="ECO:0000312" key="4">
    <source>
        <dbReference type="EMBL" id="EEE60226.1"/>
    </source>
</evidence>
<gene>
    <name type="primary">RPL18</name>
    <name type="ordered locus">Os03g0828100</name>
    <name type="ordered locus">LOC_Os03g61260</name>
    <name evidence="4" type="ORF">OsJ_13209</name>
    <name type="ORF">OSJNBa0010E04.3</name>
</gene>
<keyword id="KW-0150">Chloroplast</keyword>
<keyword id="KW-0934">Plastid</keyword>
<keyword id="KW-1185">Reference proteome</keyword>
<keyword id="KW-0687">Ribonucleoprotein</keyword>
<keyword id="KW-0689">Ribosomal protein</keyword>
<keyword id="KW-0694">RNA-binding</keyword>
<keyword id="KW-0699">rRNA-binding</keyword>
<keyword id="KW-0809">Transit peptide</keyword>
<name>RK18_ORYSJ</name>
<sequence>MLASPALAGARAFAATVSGSLGIPIPAISAPSPSQARRRASLVVVAKVKVSTPQADRIARHVRLRKKVSGTTERPRLSVFRSNKHLYAQVIDDTKSCTLVSASTMHKSLSKDLEYSAGPTVEVAQKIGEVIAKSCLEKGITKVVFDRGGFLYHGRIKALADAARENGLDF</sequence>
<accession>Q8SAY0</accession>
<accession>Q10B71</accession>
<organism>
    <name type="scientific">Oryza sativa subsp. japonica</name>
    <name type="common">Rice</name>
    <dbReference type="NCBI Taxonomy" id="39947"/>
    <lineage>
        <taxon>Eukaryota</taxon>
        <taxon>Viridiplantae</taxon>
        <taxon>Streptophyta</taxon>
        <taxon>Embryophyta</taxon>
        <taxon>Tracheophyta</taxon>
        <taxon>Spermatophyta</taxon>
        <taxon>Magnoliopsida</taxon>
        <taxon>Liliopsida</taxon>
        <taxon>Poales</taxon>
        <taxon>Poaceae</taxon>
        <taxon>BOP clade</taxon>
        <taxon>Oryzoideae</taxon>
        <taxon>Oryzeae</taxon>
        <taxon>Oryzinae</taxon>
        <taxon>Oryza</taxon>
        <taxon>Oryza sativa</taxon>
    </lineage>
</organism>
<reference key="1">
    <citation type="journal article" date="2005" name="Genome Res.">
        <title>Sequence, annotation, and analysis of synteny between rice chromosome 3 and diverged grass species.</title>
        <authorList>
            <consortium name="The rice chromosome 3 sequencing consortium"/>
            <person name="Buell C.R."/>
            <person name="Yuan Q."/>
            <person name="Ouyang S."/>
            <person name="Liu J."/>
            <person name="Zhu W."/>
            <person name="Wang A."/>
            <person name="Maiti R."/>
            <person name="Haas B."/>
            <person name="Wortman J."/>
            <person name="Pertea M."/>
            <person name="Jones K.M."/>
            <person name="Kim M."/>
            <person name="Overton L."/>
            <person name="Tsitrin T."/>
            <person name="Fadrosh D."/>
            <person name="Bera J."/>
            <person name="Weaver B."/>
            <person name="Jin S."/>
            <person name="Johri S."/>
            <person name="Reardon M."/>
            <person name="Webb K."/>
            <person name="Hill J."/>
            <person name="Moffat K."/>
            <person name="Tallon L."/>
            <person name="Van Aken S."/>
            <person name="Lewis M."/>
            <person name="Utterback T."/>
            <person name="Feldblyum T."/>
            <person name="Zismann V."/>
            <person name="Iobst S."/>
            <person name="Hsiao J."/>
            <person name="de Vazeille A.R."/>
            <person name="Salzberg S.L."/>
            <person name="White O."/>
            <person name="Fraser C.M."/>
            <person name="Yu Y."/>
            <person name="Kim H."/>
            <person name="Rambo T."/>
            <person name="Currie J."/>
            <person name="Collura K."/>
            <person name="Kernodle-Thompson S."/>
            <person name="Wei F."/>
            <person name="Kudrna K."/>
            <person name="Ammiraju J.S.S."/>
            <person name="Luo M."/>
            <person name="Goicoechea J.L."/>
            <person name="Wing R.A."/>
            <person name="Henry D."/>
            <person name="Oates R."/>
            <person name="Palmer M."/>
            <person name="Pries G."/>
            <person name="Saski C."/>
            <person name="Simmons J."/>
            <person name="Soderlund C."/>
            <person name="Nelson W."/>
            <person name="de la Bastide M."/>
            <person name="Spiegel L."/>
            <person name="Nascimento L."/>
            <person name="Huang E."/>
            <person name="Preston R."/>
            <person name="Zutavern T."/>
            <person name="Palmer L."/>
            <person name="O'Shaughnessy A."/>
            <person name="Dike S."/>
            <person name="McCombie W.R."/>
            <person name="Minx P."/>
            <person name="Cordum H."/>
            <person name="Wilson R."/>
            <person name="Jin W."/>
            <person name="Lee H.R."/>
            <person name="Jiang J."/>
            <person name="Jackson S."/>
        </authorList>
    </citation>
    <scope>NUCLEOTIDE SEQUENCE [LARGE SCALE GENOMIC DNA]</scope>
    <source>
        <strain>cv. Nipponbare</strain>
    </source>
</reference>
<reference key="2">
    <citation type="journal article" date="2005" name="Nature">
        <title>The map-based sequence of the rice genome.</title>
        <authorList>
            <consortium name="International rice genome sequencing project (IRGSP)"/>
        </authorList>
    </citation>
    <scope>NUCLEOTIDE SEQUENCE [LARGE SCALE GENOMIC DNA]</scope>
    <source>
        <strain>cv. Nipponbare</strain>
    </source>
</reference>
<reference key="3">
    <citation type="journal article" date="2008" name="Nucleic Acids Res.">
        <title>The rice annotation project database (RAP-DB): 2008 update.</title>
        <authorList>
            <consortium name="The rice annotation project (RAP)"/>
        </authorList>
    </citation>
    <scope>GENOME REANNOTATION</scope>
    <source>
        <strain>cv. Nipponbare</strain>
    </source>
</reference>
<reference key="4">
    <citation type="journal article" date="2013" name="Rice">
        <title>Improvement of the Oryza sativa Nipponbare reference genome using next generation sequence and optical map data.</title>
        <authorList>
            <person name="Kawahara Y."/>
            <person name="de la Bastide M."/>
            <person name="Hamilton J.P."/>
            <person name="Kanamori H."/>
            <person name="McCombie W.R."/>
            <person name="Ouyang S."/>
            <person name="Schwartz D.C."/>
            <person name="Tanaka T."/>
            <person name="Wu J."/>
            <person name="Zhou S."/>
            <person name="Childs K.L."/>
            <person name="Davidson R.M."/>
            <person name="Lin H."/>
            <person name="Quesada-Ocampo L."/>
            <person name="Vaillancourt B."/>
            <person name="Sakai H."/>
            <person name="Lee S.S."/>
            <person name="Kim J."/>
            <person name="Numa H."/>
            <person name="Itoh T."/>
            <person name="Buell C.R."/>
            <person name="Matsumoto T."/>
        </authorList>
    </citation>
    <scope>GENOME REANNOTATION</scope>
    <source>
        <strain>cv. Nipponbare</strain>
    </source>
</reference>
<reference key="5">
    <citation type="journal article" date="2005" name="PLoS Biol.">
        <title>The genomes of Oryza sativa: a history of duplications.</title>
        <authorList>
            <person name="Yu J."/>
            <person name="Wang J."/>
            <person name="Lin W."/>
            <person name="Li S."/>
            <person name="Li H."/>
            <person name="Zhou J."/>
            <person name="Ni P."/>
            <person name="Dong W."/>
            <person name="Hu S."/>
            <person name="Zeng C."/>
            <person name="Zhang J."/>
            <person name="Zhang Y."/>
            <person name="Li R."/>
            <person name="Xu Z."/>
            <person name="Li S."/>
            <person name="Li X."/>
            <person name="Zheng H."/>
            <person name="Cong L."/>
            <person name="Lin L."/>
            <person name="Yin J."/>
            <person name="Geng J."/>
            <person name="Li G."/>
            <person name="Shi J."/>
            <person name="Liu J."/>
            <person name="Lv H."/>
            <person name="Li J."/>
            <person name="Wang J."/>
            <person name="Deng Y."/>
            <person name="Ran L."/>
            <person name="Shi X."/>
            <person name="Wang X."/>
            <person name="Wu Q."/>
            <person name="Li C."/>
            <person name="Ren X."/>
            <person name="Wang J."/>
            <person name="Wang X."/>
            <person name="Li D."/>
            <person name="Liu D."/>
            <person name="Zhang X."/>
            <person name="Ji Z."/>
            <person name="Zhao W."/>
            <person name="Sun Y."/>
            <person name="Zhang Z."/>
            <person name="Bao J."/>
            <person name="Han Y."/>
            <person name="Dong L."/>
            <person name="Ji J."/>
            <person name="Chen P."/>
            <person name="Wu S."/>
            <person name="Liu J."/>
            <person name="Xiao Y."/>
            <person name="Bu D."/>
            <person name="Tan J."/>
            <person name="Yang L."/>
            <person name="Ye C."/>
            <person name="Zhang J."/>
            <person name="Xu J."/>
            <person name="Zhou Y."/>
            <person name="Yu Y."/>
            <person name="Zhang B."/>
            <person name="Zhuang S."/>
            <person name="Wei H."/>
            <person name="Liu B."/>
            <person name="Lei M."/>
            <person name="Yu H."/>
            <person name="Li Y."/>
            <person name="Xu H."/>
            <person name="Wei S."/>
            <person name="He X."/>
            <person name="Fang L."/>
            <person name="Zhang Z."/>
            <person name="Zhang Y."/>
            <person name="Huang X."/>
            <person name="Su Z."/>
            <person name="Tong W."/>
            <person name="Li J."/>
            <person name="Tong Z."/>
            <person name="Li S."/>
            <person name="Ye J."/>
            <person name="Wang L."/>
            <person name="Fang L."/>
            <person name="Lei T."/>
            <person name="Chen C.-S."/>
            <person name="Chen H.-C."/>
            <person name="Xu Z."/>
            <person name="Li H."/>
            <person name="Huang H."/>
            <person name="Zhang F."/>
            <person name="Xu H."/>
            <person name="Li N."/>
            <person name="Zhao C."/>
            <person name="Li S."/>
            <person name="Dong L."/>
            <person name="Huang Y."/>
            <person name="Li L."/>
            <person name="Xi Y."/>
            <person name="Qi Q."/>
            <person name="Li W."/>
            <person name="Zhang B."/>
            <person name="Hu W."/>
            <person name="Zhang Y."/>
            <person name="Tian X."/>
            <person name="Jiao Y."/>
            <person name="Liang X."/>
            <person name="Jin J."/>
            <person name="Gao L."/>
            <person name="Zheng W."/>
            <person name="Hao B."/>
            <person name="Liu S.-M."/>
            <person name="Wang W."/>
            <person name="Yuan L."/>
            <person name="Cao M."/>
            <person name="McDermott J."/>
            <person name="Samudrala R."/>
            <person name="Wang J."/>
            <person name="Wong G.K.-S."/>
            <person name="Yang H."/>
        </authorList>
    </citation>
    <scope>NUCLEOTIDE SEQUENCE [LARGE SCALE GENOMIC DNA]</scope>
    <source>
        <strain>cv. Nipponbare</strain>
    </source>
</reference>
<reference key="6">
    <citation type="journal article" date="2003" name="Science">
        <title>Collection, mapping, and annotation of over 28,000 cDNA clones from japonica rice.</title>
        <authorList>
            <consortium name="The rice full-length cDNA consortium"/>
        </authorList>
    </citation>
    <scope>NUCLEOTIDE SEQUENCE [LARGE SCALE MRNA]</scope>
    <source>
        <strain>cv. Nipponbare</strain>
    </source>
</reference>